<dbReference type="EMBL" id="AM295007">
    <property type="protein sequence ID" value="CAM30583.1"/>
    <property type="molecule type" value="Genomic_DNA"/>
</dbReference>
<dbReference type="RefSeq" id="WP_002985307.1">
    <property type="nucleotide sequence ID" value="NC_009332.1"/>
</dbReference>
<dbReference type="SMR" id="A2RFF4"/>
<dbReference type="KEGG" id="spf:SpyM51258"/>
<dbReference type="HOGENOM" id="CLU_114306_2_1_9"/>
<dbReference type="GO" id="GO:1990904">
    <property type="term" value="C:ribonucleoprotein complex"/>
    <property type="evidence" value="ECO:0007669"/>
    <property type="project" value="UniProtKB-KW"/>
</dbReference>
<dbReference type="GO" id="GO:0005840">
    <property type="term" value="C:ribosome"/>
    <property type="evidence" value="ECO:0007669"/>
    <property type="project" value="UniProtKB-KW"/>
</dbReference>
<dbReference type="GO" id="GO:0003735">
    <property type="term" value="F:structural constituent of ribosome"/>
    <property type="evidence" value="ECO:0007669"/>
    <property type="project" value="InterPro"/>
</dbReference>
<dbReference type="GO" id="GO:0006412">
    <property type="term" value="P:translation"/>
    <property type="evidence" value="ECO:0007669"/>
    <property type="project" value="UniProtKB-UniRule"/>
</dbReference>
<dbReference type="Gene3D" id="4.10.830.30">
    <property type="entry name" value="Ribosomal protein L31"/>
    <property type="match status" value="1"/>
</dbReference>
<dbReference type="HAMAP" id="MF_00502">
    <property type="entry name" value="Ribosomal_bL31_2"/>
    <property type="match status" value="1"/>
</dbReference>
<dbReference type="InterPro" id="IPR034704">
    <property type="entry name" value="Ribosomal_bL28/bL31-like_sf"/>
</dbReference>
<dbReference type="InterPro" id="IPR002150">
    <property type="entry name" value="Ribosomal_bL31"/>
</dbReference>
<dbReference type="InterPro" id="IPR027493">
    <property type="entry name" value="Ribosomal_bL31_B"/>
</dbReference>
<dbReference type="InterPro" id="IPR042105">
    <property type="entry name" value="Ribosomal_bL31_sf"/>
</dbReference>
<dbReference type="NCBIfam" id="TIGR00105">
    <property type="entry name" value="L31"/>
    <property type="match status" value="1"/>
</dbReference>
<dbReference type="NCBIfam" id="NF002462">
    <property type="entry name" value="PRK01678.1"/>
    <property type="match status" value="1"/>
</dbReference>
<dbReference type="PANTHER" id="PTHR33280">
    <property type="entry name" value="50S RIBOSOMAL PROTEIN L31, CHLOROPLASTIC"/>
    <property type="match status" value="1"/>
</dbReference>
<dbReference type="PANTHER" id="PTHR33280:SF1">
    <property type="entry name" value="LARGE RIBOSOMAL SUBUNIT PROTEIN BL31C"/>
    <property type="match status" value="1"/>
</dbReference>
<dbReference type="Pfam" id="PF01197">
    <property type="entry name" value="Ribosomal_L31"/>
    <property type="match status" value="1"/>
</dbReference>
<dbReference type="PRINTS" id="PR01249">
    <property type="entry name" value="RIBOSOMALL31"/>
</dbReference>
<dbReference type="SUPFAM" id="SSF143800">
    <property type="entry name" value="L28p-like"/>
    <property type="match status" value="1"/>
</dbReference>
<dbReference type="PROSITE" id="PS01143">
    <property type="entry name" value="RIBOSOMAL_L31"/>
    <property type="match status" value="1"/>
</dbReference>
<comment type="subunit">
    <text evidence="1">Part of the 50S ribosomal subunit.</text>
</comment>
<comment type="similarity">
    <text evidence="1">Belongs to the bacterial ribosomal protein bL31 family. Type B subfamily.</text>
</comment>
<evidence type="ECO:0000255" key="1">
    <source>
        <dbReference type="HAMAP-Rule" id="MF_00502"/>
    </source>
</evidence>
<evidence type="ECO:0000305" key="2"/>
<keyword id="KW-0687">Ribonucleoprotein</keyword>
<keyword id="KW-0689">Ribosomal protein</keyword>
<name>RL31B_STRPG</name>
<proteinExistence type="inferred from homology"/>
<protein>
    <recommendedName>
        <fullName evidence="1">Large ribosomal subunit protein bL31B</fullName>
    </recommendedName>
    <alternativeName>
        <fullName evidence="2">50S ribosomal protein L31 type B</fullName>
    </alternativeName>
</protein>
<reference key="1">
    <citation type="journal article" date="2007" name="J. Bacteriol.">
        <title>Complete genome of acute rheumatic fever-associated serotype M5 Streptococcus pyogenes strain Manfredo.</title>
        <authorList>
            <person name="Holden M.T.G."/>
            <person name="Scott A."/>
            <person name="Cherevach I."/>
            <person name="Chillingworth T."/>
            <person name="Churcher C."/>
            <person name="Cronin A."/>
            <person name="Dowd L."/>
            <person name="Feltwell T."/>
            <person name="Hamlin N."/>
            <person name="Holroyd S."/>
            <person name="Jagels K."/>
            <person name="Moule S."/>
            <person name="Mungall K."/>
            <person name="Quail M.A."/>
            <person name="Price C."/>
            <person name="Rabbinowitsch E."/>
            <person name="Sharp S."/>
            <person name="Skelton J."/>
            <person name="Whitehead S."/>
            <person name="Barrell B.G."/>
            <person name="Kehoe M."/>
            <person name="Parkhill J."/>
        </authorList>
    </citation>
    <scope>NUCLEOTIDE SEQUENCE [LARGE SCALE GENOMIC DNA]</scope>
    <source>
        <strain>Manfredo</strain>
    </source>
</reference>
<gene>
    <name evidence="1" type="primary">rpmE2</name>
    <name type="ordered locus">SpyM51258</name>
</gene>
<sequence>MRKDIHPDYRPVVFLDTTTGYQFLSGSTKASKETVEFEGETYPLIRVEISSDSHPFYTGRQKFTQADGRVDRFNKKYGLKDANAAK</sequence>
<accession>A2RFF4</accession>
<feature type="chain" id="PRO_1000014719" description="Large ribosomal subunit protein bL31B">
    <location>
        <begin position="1"/>
        <end position="86"/>
    </location>
</feature>
<organism>
    <name type="scientific">Streptococcus pyogenes serotype M5 (strain Manfredo)</name>
    <dbReference type="NCBI Taxonomy" id="160491"/>
    <lineage>
        <taxon>Bacteria</taxon>
        <taxon>Bacillati</taxon>
        <taxon>Bacillota</taxon>
        <taxon>Bacilli</taxon>
        <taxon>Lactobacillales</taxon>
        <taxon>Streptococcaceae</taxon>
        <taxon>Streptococcus</taxon>
    </lineage>
</organism>